<evidence type="ECO:0000255" key="1">
    <source>
        <dbReference type="HAMAP-Rule" id="MF_01114"/>
    </source>
</evidence>
<sequence length="258" mass="30224">MKITKLEKKKRLYLMELDNGDKCYITEDTIVRFMLSRDKVISEEELKEIQDFAQFSYGKNLALYHLSFKARTEKEVREYLKKYDIDENIVSQVIANLKEDKWINDGQYAYAIINTNQLSGDKGPYVLTQKLAQKGISKSTIEENLKEFDFSEVAQRVANKLLKKYEGKLPARALQDKIIQNLTNKGFSYSDAKIAFDDLDSQVEQETTQELIFKELDKQYTKYARKYEGYELKQRLTQVLARKGYDFSDIASALREYL</sequence>
<comment type="function">
    <text evidence="1">Modulates RecA activity.</text>
</comment>
<comment type="subcellular location">
    <subcellularLocation>
        <location evidence="1">Cytoplasm</location>
    </subcellularLocation>
</comment>
<comment type="similarity">
    <text evidence="1">Belongs to the RecX family.</text>
</comment>
<protein>
    <recommendedName>
        <fullName evidence="1">Regulatory protein RecX</fullName>
    </recommendedName>
</protein>
<keyword id="KW-0963">Cytoplasm</keyword>
<feature type="chain" id="PRO_1000164026" description="Regulatory protein RecX">
    <location>
        <begin position="1"/>
        <end position="258"/>
    </location>
</feature>
<gene>
    <name evidence="1" type="primary">recX</name>
    <name type="ordered locus">SP70585_1983</name>
</gene>
<reference key="1">
    <citation type="journal article" date="2010" name="Genome Biol.">
        <title>Structure and dynamics of the pan-genome of Streptococcus pneumoniae and closely related species.</title>
        <authorList>
            <person name="Donati C."/>
            <person name="Hiller N.L."/>
            <person name="Tettelin H."/>
            <person name="Muzzi A."/>
            <person name="Croucher N.J."/>
            <person name="Angiuoli S.V."/>
            <person name="Oggioni M."/>
            <person name="Dunning Hotopp J.C."/>
            <person name="Hu F.Z."/>
            <person name="Riley D.R."/>
            <person name="Covacci A."/>
            <person name="Mitchell T.J."/>
            <person name="Bentley S.D."/>
            <person name="Kilian M."/>
            <person name="Ehrlich G.D."/>
            <person name="Rappuoli R."/>
            <person name="Moxon E.R."/>
            <person name="Masignani V."/>
        </authorList>
    </citation>
    <scope>NUCLEOTIDE SEQUENCE [LARGE SCALE GENOMIC DNA]</scope>
    <source>
        <strain>70585</strain>
    </source>
</reference>
<organism>
    <name type="scientific">Streptococcus pneumoniae (strain 70585)</name>
    <dbReference type="NCBI Taxonomy" id="488221"/>
    <lineage>
        <taxon>Bacteria</taxon>
        <taxon>Bacillati</taxon>
        <taxon>Bacillota</taxon>
        <taxon>Bacilli</taxon>
        <taxon>Lactobacillales</taxon>
        <taxon>Streptococcaceae</taxon>
        <taxon>Streptococcus</taxon>
    </lineage>
</organism>
<dbReference type="EMBL" id="CP000918">
    <property type="protein sequence ID" value="ACO16457.1"/>
    <property type="molecule type" value="Genomic_DNA"/>
</dbReference>
<dbReference type="RefSeq" id="WP_000705089.1">
    <property type="nucleotide sequence ID" value="NC_012468.1"/>
</dbReference>
<dbReference type="SMR" id="C1C9H2"/>
<dbReference type="KEGG" id="snm:SP70585_1983"/>
<dbReference type="HOGENOM" id="CLU_066607_4_0_9"/>
<dbReference type="Proteomes" id="UP000002211">
    <property type="component" value="Chromosome"/>
</dbReference>
<dbReference type="GO" id="GO:0005737">
    <property type="term" value="C:cytoplasm"/>
    <property type="evidence" value="ECO:0007669"/>
    <property type="project" value="UniProtKB-SubCell"/>
</dbReference>
<dbReference type="GO" id="GO:0006282">
    <property type="term" value="P:regulation of DNA repair"/>
    <property type="evidence" value="ECO:0007669"/>
    <property type="project" value="UniProtKB-UniRule"/>
</dbReference>
<dbReference type="Gene3D" id="1.10.10.10">
    <property type="entry name" value="Winged helix-like DNA-binding domain superfamily/Winged helix DNA-binding domain"/>
    <property type="match status" value="4"/>
</dbReference>
<dbReference type="HAMAP" id="MF_01114">
    <property type="entry name" value="RecX"/>
    <property type="match status" value="1"/>
</dbReference>
<dbReference type="InterPro" id="IPR053926">
    <property type="entry name" value="RecX_HTH_1st"/>
</dbReference>
<dbReference type="InterPro" id="IPR053924">
    <property type="entry name" value="RecX_HTH_2nd"/>
</dbReference>
<dbReference type="InterPro" id="IPR053925">
    <property type="entry name" value="RecX_HTH_3rd"/>
</dbReference>
<dbReference type="InterPro" id="IPR003783">
    <property type="entry name" value="Regulatory_RecX"/>
</dbReference>
<dbReference type="InterPro" id="IPR036388">
    <property type="entry name" value="WH-like_DNA-bd_sf"/>
</dbReference>
<dbReference type="NCBIfam" id="NF010733">
    <property type="entry name" value="PRK14135.1"/>
    <property type="match status" value="1"/>
</dbReference>
<dbReference type="PANTHER" id="PTHR33602">
    <property type="entry name" value="REGULATORY PROTEIN RECX FAMILY PROTEIN"/>
    <property type="match status" value="1"/>
</dbReference>
<dbReference type="PANTHER" id="PTHR33602:SF1">
    <property type="entry name" value="REGULATORY PROTEIN RECX FAMILY PROTEIN"/>
    <property type="match status" value="1"/>
</dbReference>
<dbReference type="Pfam" id="PF21982">
    <property type="entry name" value="RecX_HTH1"/>
    <property type="match status" value="1"/>
</dbReference>
<dbReference type="Pfam" id="PF02631">
    <property type="entry name" value="RecX_HTH2"/>
    <property type="match status" value="1"/>
</dbReference>
<dbReference type="Pfam" id="PF21981">
    <property type="entry name" value="RecX_HTH3"/>
    <property type="match status" value="1"/>
</dbReference>
<accession>C1C9H2</accession>
<proteinExistence type="inferred from homology"/>
<name>RECX_STRP7</name>